<sequence length="326" mass="36311">MIEKLWYQRSWLNWLFAPFAALFALLTTMRRYAYRAGIFSSYRAPVPVIVVGNITVGGNGKTPMVLWLVELLTKAGYKPGVVSRGYGGKAPHYPYLLHPETTAAEAGDEPVLIYQRCGCPVAVAPKRAKAVQLLVEQCGVDVIICDDGLQHYALQRDIEFVVMDGERRLGNGWLMPMGPLRETASRLRQVMAVVCNGGQARPDEIQMSLQPAPLRNVRTNHTAVVSGAVDAMAGIGYPPRFFNSLLKQGYAVNQQVAYADHQAFNAAELHQRFAQRPLIMTEKDAVKCRDFALDNWWYLPVTAQLPEKFATRLLAQLKELRHGAGL</sequence>
<accession>C4L8W2</accession>
<reference key="1">
    <citation type="submission" date="2009-05" db="EMBL/GenBank/DDBJ databases">
        <title>Complete sequence of Tolumonas auensis DSM 9187.</title>
        <authorList>
            <consortium name="US DOE Joint Genome Institute"/>
            <person name="Lucas S."/>
            <person name="Copeland A."/>
            <person name="Lapidus A."/>
            <person name="Glavina del Rio T."/>
            <person name="Tice H."/>
            <person name="Bruce D."/>
            <person name="Goodwin L."/>
            <person name="Pitluck S."/>
            <person name="Chertkov O."/>
            <person name="Brettin T."/>
            <person name="Detter J.C."/>
            <person name="Han C."/>
            <person name="Larimer F."/>
            <person name="Land M."/>
            <person name="Hauser L."/>
            <person name="Kyrpides N."/>
            <person name="Mikhailova N."/>
            <person name="Spring S."/>
            <person name="Beller H."/>
        </authorList>
    </citation>
    <scope>NUCLEOTIDE SEQUENCE [LARGE SCALE GENOMIC DNA]</scope>
    <source>
        <strain>DSM 9187 / NBRC 110442 / TA 4</strain>
    </source>
</reference>
<gene>
    <name evidence="1" type="primary">lpxK</name>
    <name type="ordered locus">Tola_2234</name>
</gene>
<comment type="function">
    <text evidence="1">Transfers the gamma-phosphate of ATP to the 4'-position of a tetraacyldisaccharide 1-phosphate intermediate (termed DS-1-P) to form tetraacyldisaccharide 1,4'-bis-phosphate (lipid IVA).</text>
</comment>
<comment type="catalytic activity">
    <reaction evidence="1">
        <text>a lipid A disaccharide + ATP = a lipid IVA + ADP + H(+)</text>
        <dbReference type="Rhea" id="RHEA:67840"/>
        <dbReference type="ChEBI" id="CHEBI:15378"/>
        <dbReference type="ChEBI" id="CHEBI:30616"/>
        <dbReference type="ChEBI" id="CHEBI:176343"/>
        <dbReference type="ChEBI" id="CHEBI:176425"/>
        <dbReference type="ChEBI" id="CHEBI:456216"/>
        <dbReference type="EC" id="2.7.1.130"/>
    </reaction>
</comment>
<comment type="pathway">
    <text evidence="1">Glycolipid biosynthesis; lipid IV(A) biosynthesis; lipid IV(A) from (3R)-3-hydroxytetradecanoyl-[acyl-carrier-protein] and UDP-N-acetyl-alpha-D-glucosamine: step 6/6.</text>
</comment>
<comment type="similarity">
    <text evidence="1">Belongs to the LpxK family.</text>
</comment>
<dbReference type="EC" id="2.7.1.130" evidence="1"/>
<dbReference type="EMBL" id="CP001616">
    <property type="protein sequence ID" value="ACQ93832.1"/>
    <property type="molecule type" value="Genomic_DNA"/>
</dbReference>
<dbReference type="RefSeq" id="WP_015879300.1">
    <property type="nucleotide sequence ID" value="NC_012691.1"/>
</dbReference>
<dbReference type="SMR" id="C4L8W2"/>
<dbReference type="STRING" id="595494.Tola_2234"/>
<dbReference type="KEGG" id="tau:Tola_2234"/>
<dbReference type="eggNOG" id="COG1663">
    <property type="taxonomic scope" value="Bacteria"/>
</dbReference>
<dbReference type="HOGENOM" id="CLU_038816_2_0_6"/>
<dbReference type="OrthoDB" id="9766423at2"/>
<dbReference type="UniPathway" id="UPA00359">
    <property type="reaction ID" value="UER00482"/>
</dbReference>
<dbReference type="Proteomes" id="UP000009073">
    <property type="component" value="Chromosome"/>
</dbReference>
<dbReference type="GO" id="GO:0005886">
    <property type="term" value="C:plasma membrane"/>
    <property type="evidence" value="ECO:0007669"/>
    <property type="project" value="TreeGrafter"/>
</dbReference>
<dbReference type="GO" id="GO:0005524">
    <property type="term" value="F:ATP binding"/>
    <property type="evidence" value="ECO:0007669"/>
    <property type="project" value="UniProtKB-UniRule"/>
</dbReference>
<dbReference type="GO" id="GO:0009029">
    <property type="term" value="F:tetraacyldisaccharide 4'-kinase activity"/>
    <property type="evidence" value="ECO:0007669"/>
    <property type="project" value="UniProtKB-UniRule"/>
</dbReference>
<dbReference type="GO" id="GO:0009245">
    <property type="term" value="P:lipid A biosynthetic process"/>
    <property type="evidence" value="ECO:0007669"/>
    <property type="project" value="UniProtKB-UniRule"/>
</dbReference>
<dbReference type="GO" id="GO:0009244">
    <property type="term" value="P:lipopolysaccharide core region biosynthetic process"/>
    <property type="evidence" value="ECO:0007669"/>
    <property type="project" value="TreeGrafter"/>
</dbReference>
<dbReference type="HAMAP" id="MF_00409">
    <property type="entry name" value="LpxK"/>
    <property type="match status" value="1"/>
</dbReference>
<dbReference type="InterPro" id="IPR003758">
    <property type="entry name" value="LpxK"/>
</dbReference>
<dbReference type="InterPro" id="IPR027417">
    <property type="entry name" value="P-loop_NTPase"/>
</dbReference>
<dbReference type="NCBIfam" id="TIGR00682">
    <property type="entry name" value="lpxK"/>
    <property type="match status" value="1"/>
</dbReference>
<dbReference type="PANTHER" id="PTHR42724">
    <property type="entry name" value="TETRAACYLDISACCHARIDE 4'-KINASE"/>
    <property type="match status" value="1"/>
</dbReference>
<dbReference type="PANTHER" id="PTHR42724:SF1">
    <property type="entry name" value="TETRAACYLDISACCHARIDE 4'-KINASE, MITOCHONDRIAL-RELATED"/>
    <property type="match status" value="1"/>
</dbReference>
<dbReference type="Pfam" id="PF02606">
    <property type="entry name" value="LpxK"/>
    <property type="match status" value="1"/>
</dbReference>
<dbReference type="SUPFAM" id="SSF52540">
    <property type="entry name" value="P-loop containing nucleoside triphosphate hydrolases"/>
    <property type="match status" value="1"/>
</dbReference>
<keyword id="KW-0067">ATP-binding</keyword>
<keyword id="KW-0418">Kinase</keyword>
<keyword id="KW-0441">Lipid A biosynthesis</keyword>
<keyword id="KW-0444">Lipid biosynthesis</keyword>
<keyword id="KW-0443">Lipid metabolism</keyword>
<keyword id="KW-0547">Nucleotide-binding</keyword>
<keyword id="KW-1185">Reference proteome</keyword>
<keyword id="KW-0808">Transferase</keyword>
<evidence type="ECO:0000255" key="1">
    <source>
        <dbReference type="HAMAP-Rule" id="MF_00409"/>
    </source>
</evidence>
<protein>
    <recommendedName>
        <fullName evidence="1">Tetraacyldisaccharide 4'-kinase</fullName>
        <ecNumber evidence="1">2.7.1.130</ecNumber>
    </recommendedName>
    <alternativeName>
        <fullName evidence="1">Lipid A 4'-kinase</fullName>
    </alternativeName>
</protein>
<organism>
    <name type="scientific">Tolumonas auensis (strain DSM 9187 / NBRC 110442 / TA 4)</name>
    <dbReference type="NCBI Taxonomy" id="595494"/>
    <lineage>
        <taxon>Bacteria</taxon>
        <taxon>Pseudomonadati</taxon>
        <taxon>Pseudomonadota</taxon>
        <taxon>Gammaproteobacteria</taxon>
        <taxon>Aeromonadales</taxon>
        <taxon>Aeromonadaceae</taxon>
        <taxon>Tolumonas</taxon>
    </lineage>
</organism>
<feature type="chain" id="PRO_1000205975" description="Tetraacyldisaccharide 4'-kinase">
    <location>
        <begin position="1"/>
        <end position="326"/>
    </location>
</feature>
<feature type="binding site" evidence="1">
    <location>
        <begin position="55"/>
        <end position="62"/>
    </location>
    <ligand>
        <name>ATP</name>
        <dbReference type="ChEBI" id="CHEBI:30616"/>
    </ligand>
</feature>
<proteinExistence type="inferred from homology"/>
<name>LPXK_TOLAT</name>